<sequence length="65" mass="7481">MPKIKTRRSAAKRFSQTGSGKFKRRRQNLRHILTKKAASRKMRLGQSTTVDKANEKAVRRMLPNG</sequence>
<dbReference type="EMBL" id="CP001358">
    <property type="protein sequence ID" value="ACL48400.1"/>
    <property type="molecule type" value="Genomic_DNA"/>
</dbReference>
<dbReference type="SMR" id="B8J4E2"/>
<dbReference type="STRING" id="525146.Ddes_0488"/>
<dbReference type="KEGG" id="dds:Ddes_0488"/>
<dbReference type="eggNOG" id="COG0291">
    <property type="taxonomic scope" value="Bacteria"/>
</dbReference>
<dbReference type="HOGENOM" id="CLU_169643_1_1_7"/>
<dbReference type="GO" id="GO:0015934">
    <property type="term" value="C:large ribosomal subunit"/>
    <property type="evidence" value="ECO:0007669"/>
    <property type="project" value="TreeGrafter"/>
</dbReference>
<dbReference type="GO" id="GO:0003735">
    <property type="term" value="F:structural constituent of ribosome"/>
    <property type="evidence" value="ECO:0007669"/>
    <property type="project" value="InterPro"/>
</dbReference>
<dbReference type="GO" id="GO:0006412">
    <property type="term" value="P:translation"/>
    <property type="evidence" value="ECO:0007669"/>
    <property type="project" value="UniProtKB-UniRule"/>
</dbReference>
<dbReference type="FunFam" id="4.10.410.60:FF:000001">
    <property type="entry name" value="50S ribosomal protein L35"/>
    <property type="match status" value="1"/>
</dbReference>
<dbReference type="Gene3D" id="4.10.410.60">
    <property type="match status" value="1"/>
</dbReference>
<dbReference type="HAMAP" id="MF_00514">
    <property type="entry name" value="Ribosomal_bL35"/>
    <property type="match status" value="1"/>
</dbReference>
<dbReference type="InterPro" id="IPR001706">
    <property type="entry name" value="Ribosomal_bL35"/>
</dbReference>
<dbReference type="InterPro" id="IPR021137">
    <property type="entry name" value="Ribosomal_bL35-like"/>
</dbReference>
<dbReference type="InterPro" id="IPR018265">
    <property type="entry name" value="Ribosomal_bL35_CS"/>
</dbReference>
<dbReference type="InterPro" id="IPR037229">
    <property type="entry name" value="Ribosomal_bL35_sf"/>
</dbReference>
<dbReference type="NCBIfam" id="TIGR00001">
    <property type="entry name" value="rpmI_bact"/>
    <property type="match status" value="1"/>
</dbReference>
<dbReference type="PANTHER" id="PTHR33343">
    <property type="entry name" value="54S RIBOSOMAL PROTEIN BL35M"/>
    <property type="match status" value="1"/>
</dbReference>
<dbReference type="PANTHER" id="PTHR33343:SF1">
    <property type="entry name" value="LARGE RIBOSOMAL SUBUNIT PROTEIN BL35M"/>
    <property type="match status" value="1"/>
</dbReference>
<dbReference type="Pfam" id="PF01632">
    <property type="entry name" value="Ribosomal_L35p"/>
    <property type="match status" value="1"/>
</dbReference>
<dbReference type="PRINTS" id="PR00064">
    <property type="entry name" value="RIBOSOMALL35"/>
</dbReference>
<dbReference type="SUPFAM" id="SSF143034">
    <property type="entry name" value="L35p-like"/>
    <property type="match status" value="1"/>
</dbReference>
<dbReference type="PROSITE" id="PS00936">
    <property type="entry name" value="RIBOSOMAL_L35"/>
    <property type="match status" value="1"/>
</dbReference>
<proteinExistence type="inferred from homology"/>
<reference key="1">
    <citation type="submission" date="2009-01" db="EMBL/GenBank/DDBJ databases">
        <title>Complete sequence of Desulfovibrio desulfuricans subsp. desulfuricans str. ATCC 27774.</title>
        <authorList>
            <consortium name="US DOE Joint Genome Institute"/>
            <person name="Lucas S."/>
            <person name="Copeland A."/>
            <person name="Lapidus A."/>
            <person name="Glavina del Rio T."/>
            <person name="Tice H."/>
            <person name="Bruce D."/>
            <person name="Goodwin L."/>
            <person name="Pitluck S."/>
            <person name="Sims D."/>
            <person name="Lu M."/>
            <person name="Kiss H."/>
            <person name="Meineke L."/>
            <person name="Brettin T."/>
            <person name="Detter J.C."/>
            <person name="Han C."/>
            <person name="Larimer F."/>
            <person name="Land M."/>
            <person name="Hauser L."/>
            <person name="Kyrpides N."/>
            <person name="Ovchinnikova G."/>
            <person name="Hazen T.C."/>
        </authorList>
    </citation>
    <scope>NUCLEOTIDE SEQUENCE [LARGE SCALE GENOMIC DNA]</scope>
    <source>
        <strain>ATCC 27774 / DSM 6949 / MB</strain>
    </source>
</reference>
<gene>
    <name evidence="1" type="primary">rpmI</name>
    <name type="ordered locus">Ddes_0488</name>
</gene>
<keyword id="KW-0687">Ribonucleoprotein</keyword>
<keyword id="KW-0689">Ribosomal protein</keyword>
<feature type="chain" id="PRO_1000194070" description="Large ribosomal subunit protein bL35">
    <location>
        <begin position="1"/>
        <end position="65"/>
    </location>
</feature>
<feature type="region of interest" description="Disordered" evidence="2">
    <location>
        <begin position="1"/>
        <end position="65"/>
    </location>
</feature>
<feature type="compositionally biased region" description="Basic residues" evidence="2">
    <location>
        <begin position="1"/>
        <end position="11"/>
    </location>
</feature>
<feature type="compositionally biased region" description="Basic residues" evidence="2">
    <location>
        <begin position="21"/>
        <end position="43"/>
    </location>
</feature>
<comment type="similarity">
    <text evidence="1">Belongs to the bacterial ribosomal protein bL35 family.</text>
</comment>
<accession>B8J4E2</accession>
<name>RL35_DESDA</name>
<organism>
    <name type="scientific">Desulfovibrio desulfuricans (strain ATCC 27774 / DSM 6949 / MB)</name>
    <dbReference type="NCBI Taxonomy" id="525146"/>
    <lineage>
        <taxon>Bacteria</taxon>
        <taxon>Pseudomonadati</taxon>
        <taxon>Thermodesulfobacteriota</taxon>
        <taxon>Desulfovibrionia</taxon>
        <taxon>Desulfovibrionales</taxon>
        <taxon>Desulfovibrionaceae</taxon>
        <taxon>Desulfovibrio</taxon>
    </lineage>
</organism>
<evidence type="ECO:0000255" key="1">
    <source>
        <dbReference type="HAMAP-Rule" id="MF_00514"/>
    </source>
</evidence>
<evidence type="ECO:0000256" key="2">
    <source>
        <dbReference type="SAM" id="MobiDB-lite"/>
    </source>
</evidence>
<evidence type="ECO:0000305" key="3"/>
<protein>
    <recommendedName>
        <fullName evidence="1">Large ribosomal subunit protein bL35</fullName>
    </recommendedName>
    <alternativeName>
        <fullName evidence="3">50S ribosomal protein L35</fullName>
    </alternativeName>
</protein>